<sequence length="338" mass="35826">MKRMIALDGAQGEGGGQILRSALSLSMITGQPFTITGIRAGRAKPGLLRQHLTAVKAAAEICRATVEGAELGSQRLVFRPGTVRGGDYRFAIGSAGSCTLVLQTVLPALWFADGPSRVEVSGGTDNPSAPPADFIRRVLEPLLAKIGVHQQTTLLRHGFYPAGGGVVATEVSPVASFNSLQLGERGNIVQMRGEVLLAGVPRHVAEREIATLAASFSLHEQAVHSLPRDQGPGNTVSLEVESENITERFFVVGEKRVSAEVVAAQLVKEVKRYLASPAAVGEYLADQLVLPMALAGTGEFTVAHPSCHLLTNIAVVERFLPVRFGLIETDGVTRVSIE</sequence>
<keyword id="KW-0067">ATP-binding</keyword>
<keyword id="KW-0963">Cytoplasm</keyword>
<keyword id="KW-0436">Ligase</keyword>
<keyword id="KW-0547">Nucleotide-binding</keyword>
<dbReference type="EC" id="6.5.1.4" evidence="1"/>
<dbReference type="EMBL" id="CP000247">
    <property type="protein sequence ID" value="ABG71481.1"/>
    <property type="molecule type" value="Genomic_DNA"/>
</dbReference>
<dbReference type="RefSeq" id="WP_011579219.1">
    <property type="nucleotide sequence ID" value="NC_008253.1"/>
</dbReference>
<dbReference type="SMR" id="Q0TC48"/>
<dbReference type="KEGG" id="ecp:ECP_3505"/>
<dbReference type="HOGENOM" id="CLU_027882_0_0_6"/>
<dbReference type="Proteomes" id="UP000009182">
    <property type="component" value="Chromosome"/>
</dbReference>
<dbReference type="GO" id="GO:0005737">
    <property type="term" value="C:cytoplasm"/>
    <property type="evidence" value="ECO:0007669"/>
    <property type="project" value="UniProtKB-SubCell"/>
</dbReference>
<dbReference type="GO" id="GO:0005524">
    <property type="term" value="F:ATP binding"/>
    <property type="evidence" value="ECO:0007669"/>
    <property type="project" value="UniProtKB-KW"/>
</dbReference>
<dbReference type="GO" id="GO:0003963">
    <property type="term" value="F:RNA-3'-phosphate cyclase activity"/>
    <property type="evidence" value="ECO:0007669"/>
    <property type="project" value="UniProtKB-UniRule"/>
</dbReference>
<dbReference type="GO" id="GO:0006396">
    <property type="term" value="P:RNA processing"/>
    <property type="evidence" value="ECO:0007669"/>
    <property type="project" value="InterPro"/>
</dbReference>
<dbReference type="FunFam" id="3.65.10.20:FF:000002">
    <property type="entry name" value="GM19193"/>
    <property type="match status" value="1"/>
</dbReference>
<dbReference type="FunFam" id="3.30.360.20:FF:000003">
    <property type="entry name" value="RNA 3'-terminal phosphate cyclase"/>
    <property type="match status" value="1"/>
</dbReference>
<dbReference type="Gene3D" id="3.65.10.20">
    <property type="entry name" value="RNA 3'-terminal phosphate cyclase domain"/>
    <property type="match status" value="1"/>
</dbReference>
<dbReference type="Gene3D" id="3.30.360.20">
    <property type="entry name" value="RNA 3'-terminal phosphate cyclase, insert domain"/>
    <property type="match status" value="1"/>
</dbReference>
<dbReference type="HAMAP" id="MF_00200">
    <property type="entry name" value="RTC"/>
    <property type="match status" value="1"/>
</dbReference>
<dbReference type="InterPro" id="IPR013791">
    <property type="entry name" value="RNA3'-term_phos_cycl_insert"/>
</dbReference>
<dbReference type="InterPro" id="IPR023797">
    <property type="entry name" value="RNA3'_phos_cyclase_dom"/>
</dbReference>
<dbReference type="InterPro" id="IPR037136">
    <property type="entry name" value="RNA3'_phos_cyclase_dom_sf"/>
</dbReference>
<dbReference type="InterPro" id="IPR000228">
    <property type="entry name" value="RNA3'_term_phos_cyc"/>
</dbReference>
<dbReference type="InterPro" id="IPR017770">
    <property type="entry name" value="RNA3'_term_phos_cyc_type_1"/>
</dbReference>
<dbReference type="InterPro" id="IPR020719">
    <property type="entry name" value="RNA3'_term_phos_cycl-like_CS"/>
</dbReference>
<dbReference type="InterPro" id="IPR013792">
    <property type="entry name" value="RNA3'P_cycl/enolpyr_Trfase_a/b"/>
</dbReference>
<dbReference type="InterPro" id="IPR036553">
    <property type="entry name" value="RPTC_insert"/>
</dbReference>
<dbReference type="NCBIfam" id="NF003246">
    <property type="entry name" value="PRK04204.1-2"/>
    <property type="match status" value="1"/>
</dbReference>
<dbReference type="NCBIfam" id="NF003247">
    <property type="entry name" value="PRK04204.1-3"/>
    <property type="match status" value="1"/>
</dbReference>
<dbReference type="NCBIfam" id="TIGR03399">
    <property type="entry name" value="RNA_3prim_cycl"/>
    <property type="match status" value="1"/>
</dbReference>
<dbReference type="PANTHER" id="PTHR11096">
    <property type="entry name" value="RNA 3' TERMINAL PHOSPHATE CYCLASE"/>
    <property type="match status" value="1"/>
</dbReference>
<dbReference type="PANTHER" id="PTHR11096:SF0">
    <property type="entry name" value="RNA 3'-TERMINAL PHOSPHATE CYCLASE"/>
    <property type="match status" value="1"/>
</dbReference>
<dbReference type="Pfam" id="PF01137">
    <property type="entry name" value="RTC"/>
    <property type="match status" value="1"/>
</dbReference>
<dbReference type="Pfam" id="PF05189">
    <property type="entry name" value="RTC_insert"/>
    <property type="match status" value="1"/>
</dbReference>
<dbReference type="PIRSF" id="PIRSF005378">
    <property type="entry name" value="RNA3'_term_phos_cycl_euk"/>
    <property type="match status" value="1"/>
</dbReference>
<dbReference type="SUPFAM" id="SSF55205">
    <property type="entry name" value="EPT/RTPC-like"/>
    <property type="match status" value="2"/>
</dbReference>
<dbReference type="SUPFAM" id="SSF52913">
    <property type="entry name" value="RNA 3'-terminal phosphate cyclase, RPTC, insert domain"/>
    <property type="match status" value="1"/>
</dbReference>
<dbReference type="PROSITE" id="PS01287">
    <property type="entry name" value="RTC"/>
    <property type="match status" value="1"/>
</dbReference>
<feature type="chain" id="PRO_0000264795" description="RNA 3'-terminal phosphate cyclase">
    <location>
        <begin position="1"/>
        <end position="338"/>
    </location>
</feature>
<feature type="active site" description="Tele-AMP-histidine intermediate" evidence="1">
    <location>
        <position position="308"/>
    </location>
</feature>
<feature type="binding site" evidence="1">
    <location>
        <position position="103"/>
    </location>
    <ligand>
        <name>ATP</name>
        <dbReference type="ChEBI" id="CHEBI:30616"/>
    </ligand>
</feature>
<feature type="binding site" evidence="1">
    <location>
        <begin position="283"/>
        <end position="287"/>
    </location>
    <ligand>
        <name>ATP</name>
        <dbReference type="ChEBI" id="CHEBI:30616"/>
    </ligand>
</feature>
<organism>
    <name type="scientific">Escherichia coli O6:K15:H31 (strain 536 / UPEC)</name>
    <dbReference type="NCBI Taxonomy" id="362663"/>
    <lineage>
        <taxon>Bacteria</taxon>
        <taxon>Pseudomonadati</taxon>
        <taxon>Pseudomonadota</taxon>
        <taxon>Gammaproteobacteria</taxon>
        <taxon>Enterobacterales</taxon>
        <taxon>Enterobacteriaceae</taxon>
        <taxon>Escherichia</taxon>
    </lineage>
</organism>
<gene>
    <name evidence="1" type="primary">rtcA</name>
    <name type="ordered locus">ECP_3505</name>
</gene>
<accession>Q0TC48</accession>
<name>RTCA_ECOL5</name>
<reference key="1">
    <citation type="journal article" date="2006" name="Mol. Microbiol.">
        <title>Role of pathogenicity island-associated integrases in the genome plasticity of uropathogenic Escherichia coli strain 536.</title>
        <authorList>
            <person name="Hochhut B."/>
            <person name="Wilde C."/>
            <person name="Balling G."/>
            <person name="Middendorf B."/>
            <person name="Dobrindt U."/>
            <person name="Brzuszkiewicz E."/>
            <person name="Gottschalk G."/>
            <person name="Carniel E."/>
            <person name="Hacker J."/>
        </authorList>
    </citation>
    <scope>NUCLEOTIDE SEQUENCE [LARGE SCALE GENOMIC DNA]</scope>
    <source>
        <strain>536 / UPEC</strain>
    </source>
</reference>
<protein>
    <recommendedName>
        <fullName evidence="1">RNA 3'-terminal phosphate cyclase</fullName>
        <shortName evidence="1">RNA cyclase</shortName>
        <shortName evidence="1">RNA-3'-phosphate cyclase</shortName>
        <ecNumber evidence="1">6.5.1.4</ecNumber>
    </recommendedName>
</protein>
<proteinExistence type="inferred from homology"/>
<evidence type="ECO:0000255" key="1">
    <source>
        <dbReference type="HAMAP-Rule" id="MF_00200"/>
    </source>
</evidence>
<comment type="function">
    <text evidence="1">Catalyzes the conversion of 3'-phosphate to a 2',3'-cyclic phosphodiester at the end of RNA. The mechanism of action of the enzyme occurs in 3 steps: (A) adenylation of the enzyme by ATP; (B) transfer of adenylate to an RNA-N3'P to produce RNA-N3'PP5'A; (C) and attack of the adjacent 2'-hydroxyl on the 3'-phosphorus in the diester linkage to produce the cyclic end product. The biological role of this enzyme is unknown but it is likely to function in some aspects of cellular RNA processing.</text>
</comment>
<comment type="catalytic activity">
    <reaction evidence="1">
        <text>a 3'-end 3'-phospho-ribonucleotide-RNA + ATP = a 3'-end 2',3'-cyclophospho-ribonucleotide-RNA + AMP + diphosphate</text>
        <dbReference type="Rhea" id="RHEA:23976"/>
        <dbReference type="Rhea" id="RHEA-COMP:10463"/>
        <dbReference type="Rhea" id="RHEA-COMP:10464"/>
        <dbReference type="ChEBI" id="CHEBI:30616"/>
        <dbReference type="ChEBI" id="CHEBI:33019"/>
        <dbReference type="ChEBI" id="CHEBI:83062"/>
        <dbReference type="ChEBI" id="CHEBI:83064"/>
        <dbReference type="ChEBI" id="CHEBI:456215"/>
        <dbReference type="EC" id="6.5.1.4"/>
    </reaction>
</comment>
<comment type="subcellular location">
    <subcellularLocation>
        <location evidence="1">Cytoplasm</location>
    </subcellularLocation>
</comment>
<comment type="similarity">
    <text evidence="1">Belongs to the RNA 3'-terminal cyclase family. Type 1 subfamily.</text>
</comment>